<feature type="chain" id="PRO_0000336791" description="ATP-dependent protease subunit HslV">
    <location>
        <begin position="1"/>
        <end position="185"/>
    </location>
</feature>
<feature type="active site" evidence="1">
    <location>
        <position position="12"/>
    </location>
</feature>
<feature type="binding site" evidence="1">
    <location>
        <position position="168"/>
    </location>
    <ligand>
        <name>Na(+)</name>
        <dbReference type="ChEBI" id="CHEBI:29101"/>
    </ligand>
</feature>
<feature type="binding site" evidence="1">
    <location>
        <position position="171"/>
    </location>
    <ligand>
        <name>Na(+)</name>
        <dbReference type="ChEBI" id="CHEBI:29101"/>
    </ligand>
</feature>
<feature type="binding site" evidence="1">
    <location>
        <position position="174"/>
    </location>
    <ligand>
        <name>Na(+)</name>
        <dbReference type="ChEBI" id="CHEBI:29101"/>
    </ligand>
</feature>
<gene>
    <name evidence="1" type="primary">hslV</name>
    <name type="ordered locus">Rsph17025_2949</name>
</gene>
<accession>A4WWS1</accession>
<comment type="function">
    <text evidence="1">Protease subunit of a proteasome-like degradation complex believed to be a general protein degrading machinery.</text>
</comment>
<comment type="catalytic activity">
    <reaction evidence="1">
        <text>ATP-dependent cleavage of peptide bonds with broad specificity.</text>
        <dbReference type="EC" id="3.4.25.2"/>
    </reaction>
</comment>
<comment type="activity regulation">
    <text evidence="1">Allosterically activated by HslU binding.</text>
</comment>
<comment type="subunit">
    <text evidence="1">A double ring-shaped homohexamer of HslV is capped on each side by a ring-shaped HslU homohexamer. The assembly of the HslU/HslV complex is dependent on binding of ATP.</text>
</comment>
<comment type="subcellular location">
    <subcellularLocation>
        <location evidence="1">Cytoplasm</location>
    </subcellularLocation>
</comment>
<comment type="similarity">
    <text evidence="1">Belongs to the peptidase T1B family. HslV subfamily.</text>
</comment>
<organism>
    <name type="scientific">Cereibacter sphaeroides (strain ATCC 17025 / ATH 2.4.3)</name>
    <name type="common">Rhodobacter sphaeroides</name>
    <dbReference type="NCBI Taxonomy" id="349102"/>
    <lineage>
        <taxon>Bacteria</taxon>
        <taxon>Pseudomonadati</taxon>
        <taxon>Pseudomonadota</taxon>
        <taxon>Alphaproteobacteria</taxon>
        <taxon>Rhodobacterales</taxon>
        <taxon>Paracoccaceae</taxon>
        <taxon>Cereibacter</taxon>
    </lineage>
</organism>
<evidence type="ECO:0000255" key="1">
    <source>
        <dbReference type="HAMAP-Rule" id="MF_00248"/>
    </source>
</evidence>
<keyword id="KW-0021">Allosteric enzyme</keyword>
<keyword id="KW-0963">Cytoplasm</keyword>
<keyword id="KW-0378">Hydrolase</keyword>
<keyword id="KW-0479">Metal-binding</keyword>
<keyword id="KW-0645">Protease</keyword>
<keyword id="KW-0915">Sodium</keyword>
<keyword id="KW-0888">Threonine protease</keyword>
<protein>
    <recommendedName>
        <fullName evidence="1">ATP-dependent protease subunit HslV</fullName>
        <ecNumber evidence="1">3.4.25.2</ecNumber>
    </recommendedName>
</protein>
<reference key="1">
    <citation type="submission" date="2007-04" db="EMBL/GenBank/DDBJ databases">
        <title>Complete sequence of chromosome of Rhodobacter sphaeroides ATCC 17025.</title>
        <authorList>
            <consortium name="US DOE Joint Genome Institute"/>
            <person name="Copeland A."/>
            <person name="Lucas S."/>
            <person name="Lapidus A."/>
            <person name="Barry K."/>
            <person name="Detter J.C."/>
            <person name="Glavina del Rio T."/>
            <person name="Hammon N."/>
            <person name="Israni S."/>
            <person name="Dalin E."/>
            <person name="Tice H."/>
            <person name="Pitluck S."/>
            <person name="Chertkov O."/>
            <person name="Brettin T."/>
            <person name="Bruce D."/>
            <person name="Han C."/>
            <person name="Schmutz J."/>
            <person name="Larimer F."/>
            <person name="Land M."/>
            <person name="Hauser L."/>
            <person name="Kyrpides N."/>
            <person name="Kim E."/>
            <person name="Richardson P."/>
            <person name="Mackenzie C."/>
            <person name="Choudhary M."/>
            <person name="Donohue T.J."/>
            <person name="Kaplan S."/>
        </authorList>
    </citation>
    <scope>NUCLEOTIDE SEQUENCE [LARGE SCALE GENOMIC DNA]</scope>
    <source>
        <strain>ATCC 17025 / ATH 2.4.3</strain>
    </source>
</reference>
<dbReference type="EC" id="3.4.25.2" evidence="1"/>
<dbReference type="EMBL" id="CP000661">
    <property type="protein sequence ID" value="ABP71835.1"/>
    <property type="molecule type" value="Genomic_DNA"/>
</dbReference>
<dbReference type="SMR" id="A4WWS1"/>
<dbReference type="STRING" id="349102.Rsph17025_2949"/>
<dbReference type="MEROPS" id="T01.006"/>
<dbReference type="KEGG" id="rsq:Rsph17025_2949"/>
<dbReference type="eggNOG" id="COG5405">
    <property type="taxonomic scope" value="Bacteria"/>
</dbReference>
<dbReference type="HOGENOM" id="CLU_093872_1_0_5"/>
<dbReference type="BioCyc" id="RSPH349102:G1G8M-3049-MONOMER"/>
<dbReference type="GO" id="GO:0009376">
    <property type="term" value="C:HslUV protease complex"/>
    <property type="evidence" value="ECO:0007669"/>
    <property type="project" value="UniProtKB-UniRule"/>
</dbReference>
<dbReference type="GO" id="GO:0005839">
    <property type="term" value="C:proteasome core complex"/>
    <property type="evidence" value="ECO:0007669"/>
    <property type="project" value="InterPro"/>
</dbReference>
<dbReference type="GO" id="GO:0046872">
    <property type="term" value="F:metal ion binding"/>
    <property type="evidence" value="ECO:0007669"/>
    <property type="project" value="UniProtKB-KW"/>
</dbReference>
<dbReference type="GO" id="GO:0004298">
    <property type="term" value="F:threonine-type endopeptidase activity"/>
    <property type="evidence" value="ECO:0007669"/>
    <property type="project" value="UniProtKB-KW"/>
</dbReference>
<dbReference type="GO" id="GO:0051603">
    <property type="term" value="P:proteolysis involved in protein catabolic process"/>
    <property type="evidence" value="ECO:0007669"/>
    <property type="project" value="InterPro"/>
</dbReference>
<dbReference type="CDD" id="cd01913">
    <property type="entry name" value="protease_HslV"/>
    <property type="match status" value="1"/>
</dbReference>
<dbReference type="Gene3D" id="3.60.20.10">
    <property type="entry name" value="Glutamine Phosphoribosylpyrophosphate, subunit 1, domain 1"/>
    <property type="match status" value="1"/>
</dbReference>
<dbReference type="HAMAP" id="MF_00248">
    <property type="entry name" value="HslV"/>
    <property type="match status" value="1"/>
</dbReference>
<dbReference type="InterPro" id="IPR022281">
    <property type="entry name" value="ATP-dep_Prtase_HsIV_su"/>
</dbReference>
<dbReference type="InterPro" id="IPR029055">
    <property type="entry name" value="Ntn_hydrolases_N"/>
</dbReference>
<dbReference type="InterPro" id="IPR001353">
    <property type="entry name" value="Proteasome_sua/b"/>
</dbReference>
<dbReference type="InterPro" id="IPR023333">
    <property type="entry name" value="Proteasome_suB-type"/>
</dbReference>
<dbReference type="NCBIfam" id="TIGR03692">
    <property type="entry name" value="ATP_dep_HslV"/>
    <property type="match status" value="1"/>
</dbReference>
<dbReference type="NCBIfam" id="NF003964">
    <property type="entry name" value="PRK05456.1"/>
    <property type="match status" value="1"/>
</dbReference>
<dbReference type="PANTHER" id="PTHR32194:SF7">
    <property type="entry name" value="ATP-DEPENDENT PROTEASE SUBUNIT HSLV"/>
    <property type="match status" value="1"/>
</dbReference>
<dbReference type="PANTHER" id="PTHR32194">
    <property type="entry name" value="METALLOPROTEASE TLDD"/>
    <property type="match status" value="1"/>
</dbReference>
<dbReference type="Pfam" id="PF00227">
    <property type="entry name" value="Proteasome"/>
    <property type="match status" value="1"/>
</dbReference>
<dbReference type="PIRSF" id="PIRSF039093">
    <property type="entry name" value="HslV"/>
    <property type="match status" value="1"/>
</dbReference>
<dbReference type="SUPFAM" id="SSF56235">
    <property type="entry name" value="N-terminal nucleophile aminohydrolases (Ntn hydrolases)"/>
    <property type="match status" value="1"/>
</dbReference>
<dbReference type="PROSITE" id="PS51476">
    <property type="entry name" value="PROTEASOME_BETA_2"/>
    <property type="match status" value="1"/>
</dbReference>
<sequence length="185" mass="19517">MAEDRFPGWHGTTILAVRRGGEVVVAGDGQVSLGQTVIKGTARKVRRLSPGGHEVVAGFAGSTADAFTLLERLEKKLEAASGQLARACVELAKDWRMDKYLRNLEAMLIVTDGETLLVITGAGDVLEPEHDVTAIGSGGNFALAAARGLMATDLPAEEVARKAMAIAADICVYTNGNLTVERISK</sequence>
<name>HSLV_CERS5</name>
<proteinExistence type="inferred from homology"/>